<evidence type="ECO:0000255" key="1">
    <source>
        <dbReference type="HAMAP-Rule" id="MF_00235"/>
    </source>
</evidence>
<feature type="chain" id="PRO_0000158782" description="Adenylate kinase">
    <location>
        <begin position="1"/>
        <end position="215"/>
    </location>
</feature>
<feature type="region of interest" description="NMP" evidence="1">
    <location>
        <begin position="30"/>
        <end position="59"/>
    </location>
</feature>
<feature type="region of interest" description="LID" evidence="1">
    <location>
        <begin position="127"/>
        <end position="165"/>
    </location>
</feature>
<feature type="binding site" evidence="1">
    <location>
        <begin position="10"/>
        <end position="15"/>
    </location>
    <ligand>
        <name>ATP</name>
        <dbReference type="ChEBI" id="CHEBI:30616"/>
    </ligand>
</feature>
<feature type="binding site" evidence="1">
    <location>
        <position position="31"/>
    </location>
    <ligand>
        <name>AMP</name>
        <dbReference type="ChEBI" id="CHEBI:456215"/>
    </ligand>
</feature>
<feature type="binding site" evidence="1">
    <location>
        <position position="36"/>
    </location>
    <ligand>
        <name>AMP</name>
        <dbReference type="ChEBI" id="CHEBI:456215"/>
    </ligand>
</feature>
<feature type="binding site" evidence="1">
    <location>
        <begin position="57"/>
        <end position="59"/>
    </location>
    <ligand>
        <name>AMP</name>
        <dbReference type="ChEBI" id="CHEBI:456215"/>
    </ligand>
</feature>
<feature type="binding site" evidence="1">
    <location>
        <begin position="86"/>
        <end position="89"/>
    </location>
    <ligand>
        <name>AMP</name>
        <dbReference type="ChEBI" id="CHEBI:456215"/>
    </ligand>
</feature>
<feature type="binding site" evidence="1">
    <location>
        <position position="93"/>
    </location>
    <ligand>
        <name>AMP</name>
        <dbReference type="ChEBI" id="CHEBI:456215"/>
    </ligand>
</feature>
<feature type="binding site" evidence="1">
    <location>
        <position position="128"/>
    </location>
    <ligand>
        <name>ATP</name>
        <dbReference type="ChEBI" id="CHEBI:30616"/>
    </ligand>
</feature>
<feature type="binding site" evidence="1">
    <location>
        <position position="131"/>
    </location>
    <ligand>
        <name>Zn(2+)</name>
        <dbReference type="ChEBI" id="CHEBI:29105"/>
        <note>structural</note>
    </ligand>
</feature>
<feature type="binding site" evidence="1">
    <location>
        <position position="134"/>
    </location>
    <ligand>
        <name>Zn(2+)</name>
        <dbReference type="ChEBI" id="CHEBI:29105"/>
        <note>structural</note>
    </ligand>
</feature>
<feature type="binding site" evidence="1">
    <location>
        <begin position="137"/>
        <end position="138"/>
    </location>
    <ligand>
        <name>ATP</name>
        <dbReference type="ChEBI" id="CHEBI:30616"/>
    </ligand>
</feature>
<feature type="binding site" evidence="1">
    <location>
        <position position="151"/>
    </location>
    <ligand>
        <name>Zn(2+)</name>
        <dbReference type="ChEBI" id="CHEBI:29105"/>
        <note>structural</note>
    </ligand>
</feature>
<feature type="binding site" evidence="1">
    <location>
        <position position="154"/>
    </location>
    <ligand>
        <name>Zn(2+)</name>
        <dbReference type="ChEBI" id="CHEBI:29105"/>
        <note>structural</note>
    </ligand>
</feature>
<feature type="binding site" evidence="1">
    <location>
        <position position="162"/>
    </location>
    <ligand>
        <name>AMP</name>
        <dbReference type="ChEBI" id="CHEBI:456215"/>
    </ligand>
</feature>
<feature type="binding site" evidence="1">
    <location>
        <position position="173"/>
    </location>
    <ligand>
        <name>AMP</name>
        <dbReference type="ChEBI" id="CHEBI:456215"/>
    </ligand>
</feature>
<feature type="binding site" evidence="1">
    <location>
        <position position="201"/>
    </location>
    <ligand>
        <name>ATP</name>
        <dbReference type="ChEBI" id="CHEBI:30616"/>
    </ligand>
</feature>
<keyword id="KW-0067">ATP-binding</keyword>
<keyword id="KW-0963">Cytoplasm</keyword>
<keyword id="KW-0418">Kinase</keyword>
<keyword id="KW-0479">Metal-binding</keyword>
<keyword id="KW-0545">Nucleotide biosynthesis</keyword>
<keyword id="KW-0547">Nucleotide-binding</keyword>
<keyword id="KW-0808">Transferase</keyword>
<keyword id="KW-0862">Zinc</keyword>
<gene>
    <name evidence="1" type="primary">adk</name>
</gene>
<comment type="function">
    <text evidence="1">Catalyzes the reversible transfer of the terminal phosphate group between ATP and AMP. Plays an important role in cellular energy homeostasis and in adenine nucleotide metabolism.</text>
</comment>
<comment type="catalytic activity">
    <reaction evidence="1">
        <text>AMP + ATP = 2 ADP</text>
        <dbReference type="Rhea" id="RHEA:12973"/>
        <dbReference type="ChEBI" id="CHEBI:30616"/>
        <dbReference type="ChEBI" id="CHEBI:456215"/>
        <dbReference type="ChEBI" id="CHEBI:456216"/>
        <dbReference type="EC" id="2.7.4.3"/>
    </reaction>
</comment>
<comment type="pathway">
    <text evidence="1">Purine metabolism; AMP biosynthesis via salvage pathway; AMP from ADP: step 1/1.</text>
</comment>
<comment type="subunit">
    <text evidence="1">Monomer.</text>
</comment>
<comment type="subcellular location">
    <subcellularLocation>
        <location evidence="1">Cytoplasm</location>
    </subcellularLocation>
</comment>
<comment type="domain">
    <text evidence="1">Consists of three domains, a large central CORE domain and two small peripheral domains, NMPbind and LID, which undergo movements during catalysis. The LID domain closes over the site of phosphoryl transfer upon ATP binding. Assembling and dissambling the active center during each catalytic cycle provides an effective means to prevent ATP hydrolysis. Some bacteria have evolved a zinc-coordinating structure that stabilizes the LID domain.</text>
</comment>
<comment type="similarity">
    <text evidence="1">Belongs to the adenylate kinase family.</text>
</comment>
<protein>
    <recommendedName>
        <fullName evidence="1">Adenylate kinase</fullName>
        <shortName evidence="1">AK</shortName>
        <ecNumber evidence="1">2.7.4.3</ecNumber>
    </recommendedName>
    <alternativeName>
        <fullName evidence="1">ATP-AMP transphosphorylase</fullName>
    </alternativeName>
    <alternativeName>
        <fullName evidence="1">ATP:AMP phosphotransferase</fullName>
    </alternativeName>
    <alternativeName>
        <fullName evidence="1">Adenylate monophosphate kinase</fullName>
    </alternativeName>
</protein>
<proteinExistence type="inferred from homology"/>
<dbReference type="EC" id="2.7.4.3" evidence="1"/>
<dbReference type="EMBL" id="X59250">
    <property type="protein sequence ID" value="CAA41940.1"/>
    <property type="molecule type" value="Genomic_DNA"/>
</dbReference>
<dbReference type="PIR" id="S17987">
    <property type="entry name" value="S17987"/>
</dbReference>
<dbReference type="RefSeq" id="WP_011677149.1">
    <property type="nucleotide sequence ID" value="NZ_WJUX01000016.1"/>
</dbReference>
<dbReference type="SMR" id="P27143"/>
<dbReference type="OMA" id="VYHEQTA"/>
<dbReference type="UniPathway" id="UPA00588">
    <property type="reaction ID" value="UER00649"/>
</dbReference>
<dbReference type="GO" id="GO:0005737">
    <property type="term" value="C:cytoplasm"/>
    <property type="evidence" value="ECO:0007669"/>
    <property type="project" value="UniProtKB-SubCell"/>
</dbReference>
<dbReference type="GO" id="GO:0004017">
    <property type="term" value="F:adenylate kinase activity"/>
    <property type="evidence" value="ECO:0007669"/>
    <property type="project" value="UniProtKB-UniRule"/>
</dbReference>
<dbReference type="GO" id="GO:0005524">
    <property type="term" value="F:ATP binding"/>
    <property type="evidence" value="ECO:0007669"/>
    <property type="project" value="UniProtKB-UniRule"/>
</dbReference>
<dbReference type="GO" id="GO:0008270">
    <property type="term" value="F:zinc ion binding"/>
    <property type="evidence" value="ECO:0007669"/>
    <property type="project" value="UniProtKB-UniRule"/>
</dbReference>
<dbReference type="GO" id="GO:0044209">
    <property type="term" value="P:AMP salvage"/>
    <property type="evidence" value="ECO:0007669"/>
    <property type="project" value="UniProtKB-UniRule"/>
</dbReference>
<dbReference type="CDD" id="cd01428">
    <property type="entry name" value="ADK"/>
    <property type="match status" value="1"/>
</dbReference>
<dbReference type="FunFam" id="3.40.50.300:FF:000106">
    <property type="entry name" value="Adenylate kinase mitochondrial"/>
    <property type="match status" value="1"/>
</dbReference>
<dbReference type="Gene3D" id="3.40.50.300">
    <property type="entry name" value="P-loop containing nucleotide triphosphate hydrolases"/>
    <property type="match status" value="1"/>
</dbReference>
<dbReference type="HAMAP" id="MF_00235">
    <property type="entry name" value="Adenylate_kinase_Adk"/>
    <property type="match status" value="1"/>
</dbReference>
<dbReference type="InterPro" id="IPR006259">
    <property type="entry name" value="Adenyl_kin_sub"/>
</dbReference>
<dbReference type="InterPro" id="IPR000850">
    <property type="entry name" value="Adenylat/UMP-CMP_kin"/>
</dbReference>
<dbReference type="InterPro" id="IPR033690">
    <property type="entry name" value="Adenylat_kinase_CS"/>
</dbReference>
<dbReference type="InterPro" id="IPR007862">
    <property type="entry name" value="Adenylate_kinase_lid-dom"/>
</dbReference>
<dbReference type="InterPro" id="IPR027417">
    <property type="entry name" value="P-loop_NTPase"/>
</dbReference>
<dbReference type="NCBIfam" id="TIGR01351">
    <property type="entry name" value="adk"/>
    <property type="match status" value="1"/>
</dbReference>
<dbReference type="NCBIfam" id="NF001380">
    <property type="entry name" value="PRK00279.1-2"/>
    <property type="match status" value="1"/>
</dbReference>
<dbReference type="NCBIfam" id="NF001381">
    <property type="entry name" value="PRK00279.1-3"/>
    <property type="match status" value="1"/>
</dbReference>
<dbReference type="NCBIfam" id="NF001382">
    <property type="entry name" value="PRK00279.1-4"/>
    <property type="match status" value="1"/>
</dbReference>
<dbReference type="PANTHER" id="PTHR23359">
    <property type="entry name" value="NUCLEOTIDE KINASE"/>
    <property type="match status" value="1"/>
</dbReference>
<dbReference type="Pfam" id="PF00406">
    <property type="entry name" value="ADK"/>
    <property type="match status" value="1"/>
</dbReference>
<dbReference type="Pfam" id="PF05191">
    <property type="entry name" value="ADK_lid"/>
    <property type="match status" value="1"/>
</dbReference>
<dbReference type="PRINTS" id="PR00094">
    <property type="entry name" value="ADENYLTKNASE"/>
</dbReference>
<dbReference type="SUPFAM" id="SSF52540">
    <property type="entry name" value="P-loop containing nucleoside triphosphate hydrolases"/>
    <property type="match status" value="1"/>
</dbReference>
<dbReference type="PROSITE" id="PS00113">
    <property type="entry name" value="ADENYLATE_KINASE"/>
    <property type="match status" value="1"/>
</dbReference>
<organism>
    <name type="scientific">Lactococcus lactis subsp. cremoris</name>
    <name type="common">Streptococcus cremoris</name>
    <dbReference type="NCBI Taxonomy" id="1359"/>
    <lineage>
        <taxon>Bacteria</taxon>
        <taxon>Bacillati</taxon>
        <taxon>Bacillota</taxon>
        <taxon>Bacilli</taxon>
        <taxon>Lactobacillales</taxon>
        <taxon>Streptococcaceae</taxon>
        <taxon>Lactococcus</taxon>
    </lineage>
</organism>
<reference key="1">
    <citation type="journal article" date="1991" name="J. Gen. Microbiol.">
        <title>Nucleotide sequence of a Lactococcus lactis gene cluster encoding adenylate kinase, initiation factor 1 and ribosomal proteins.</title>
        <authorList>
            <person name="Koivula T."/>
            <person name="Hemilae H."/>
        </authorList>
    </citation>
    <scope>NUCLEOTIDE SEQUENCE [GENOMIC DNA]</scope>
    <source>
        <strain>MG1614</strain>
    </source>
</reference>
<accession>P27143</accession>
<name>KAD_LACLC</name>
<sequence>MNLLIMGLPGAGKGTQAEFIVKNYGVNHISTGDMFRAAMKNETEMGKLAKSFIDKGELVPDEVTNGIVKERLAQDDIKASGFLLDGYPRTIDQAHALDTMLEELGIKLDAVVNIVVNPNILVDRLSGRYICRNCGATYHKIFNPTKVEGTCDVCGSHDLYQRADDVPETVKNRLDVNIKESAPIIEHYTELGLVKNIEGEQEISQVTDDIKKVLG</sequence>